<reference evidence="4" key="1">
    <citation type="journal article" date="2018" name="J. Proteome Res.">
        <title>Mating-induced differential peptidomics of neuropeptides and protein hormones in Agrotis ipsilon moths.</title>
        <authorList>
            <person name="Diesner M."/>
            <person name="Gallot A."/>
            <person name="Binz H."/>
            <person name="Gaertner C."/>
            <person name="Vitecek S."/>
            <person name="Kahnt J."/>
            <person name="Schachtner J."/>
            <person name="Jacquin-Joly E."/>
            <person name="Gadenne C."/>
        </authorList>
    </citation>
    <scope>NUCLEOTIDE SEQUENCE [MRNA]</scope>
    <scope>PROTEIN SEQUENCE OF 48-65</scope>
    <scope>TISSUE SPECIFICITY</scope>
    <scope>MASS SPECTROMETRY</scope>
    <scope>IDENTIFICATION BY MASS SPECTROMETRY</scope>
    <scope>AMIDATION AT ARG-65</scope>
</reference>
<dbReference type="GO" id="GO:0005576">
    <property type="term" value="C:extracellular region"/>
    <property type="evidence" value="ECO:0007669"/>
    <property type="project" value="UniProtKB-SubCell"/>
</dbReference>
<dbReference type="GO" id="GO:0005179">
    <property type="term" value="F:hormone activity"/>
    <property type="evidence" value="ECO:0007669"/>
    <property type="project" value="InterPro"/>
</dbReference>
<dbReference type="GO" id="GO:0007218">
    <property type="term" value="P:neuropeptide signaling pathway"/>
    <property type="evidence" value="ECO:0007669"/>
    <property type="project" value="UniProtKB-KW"/>
</dbReference>
<dbReference type="CDD" id="cd04366">
    <property type="entry name" value="IlGF_insulin_bombyxin_like"/>
    <property type="match status" value="1"/>
</dbReference>
<dbReference type="Gene3D" id="1.10.100.10">
    <property type="entry name" value="Insulin-like"/>
    <property type="match status" value="1"/>
</dbReference>
<dbReference type="InterPro" id="IPR016179">
    <property type="entry name" value="Insulin-like"/>
</dbReference>
<dbReference type="InterPro" id="IPR036438">
    <property type="entry name" value="Insulin-like_sf"/>
</dbReference>
<dbReference type="InterPro" id="IPR022353">
    <property type="entry name" value="Insulin_CS"/>
</dbReference>
<dbReference type="InterPro" id="IPR022352">
    <property type="entry name" value="Insulin_family"/>
</dbReference>
<dbReference type="Pfam" id="PF00049">
    <property type="entry name" value="Insulin"/>
    <property type="match status" value="1"/>
</dbReference>
<dbReference type="PRINTS" id="PR00276">
    <property type="entry name" value="INSULINFAMLY"/>
</dbReference>
<dbReference type="SMART" id="SM00078">
    <property type="entry name" value="IlGF"/>
    <property type="match status" value="1"/>
</dbReference>
<dbReference type="SUPFAM" id="SSF56994">
    <property type="entry name" value="Insulin-like"/>
    <property type="match status" value="1"/>
</dbReference>
<dbReference type="PROSITE" id="PS00262">
    <property type="entry name" value="INSULIN"/>
    <property type="match status" value="1"/>
</dbReference>
<keyword id="KW-0027">Amidation</keyword>
<keyword id="KW-0165">Cleavage on pair of basic residues</keyword>
<keyword id="KW-0903">Direct protein sequencing</keyword>
<keyword id="KW-0527">Neuropeptide</keyword>
<keyword id="KW-0873">Pyrrolidone carboxylic acid</keyword>
<keyword id="KW-0964">Secreted</keyword>
<keyword id="KW-0732">Signal</keyword>
<proteinExistence type="evidence at protein level"/>
<feature type="signal peptide" evidence="1">
    <location>
        <begin position="1"/>
        <end position="19"/>
    </location>
</feature>
<feature type="propeptide" id="PRO_0000444523" evidence="5">
    <location>
        <begin position="20"/>
        <end position="45"/>
    </location>
</feature>
<feature type="peptide" id="PRO_0000444524" description="DAGWWLTRGAARSLGGVR-amide" evidence="2">
    <location>
        <begin position="48"/>
        <end position="65"/>
    </location>
</feature>
<feature type="propeptide" id="PRO_0000444525" evidence="5">
    <location>
        <begin position="69"/>
        <end position="88"/>
    </location>
</feature>
<feature type="modified residue" description="Arginine amide" evidence="2">
    <location>
        <position position="65"/>
    </location>
</feature>
<protein>
    <recommendedName>
        <fullName evidence="3">Insulin-related peptide 4</fullName>
        <shortName evidence="3">IRP-4</shortName>
    </recommendedName>
    <component>
        <recommendedName>
            <fullName evidence="5">DAGWWLTRGAARSLGGVR-amide</fullName>
        </recommendedName>
    </component>
</protein>
<sequence length="88" mass="9682">MKLTLIILLVVAYSWCSEAQNEARVFCGRVLSERLAALCWGPNSVKRDAGWWLTRGAARSLGGVRGKRGLATECCDKACTVEELLSYC</sequence>
<accession>C0HKS5</accession>
<comment type="subcellular location">
    <subcellularLocation>
        <location evidence="4">Secreted</location>
    </subcellularLocation>
</comment>
<comment type="tissue specificity">
    <text evidence="2">DAGWWLTRGAARSLGGVR-amide: Expressed in corpora cardiaca (CC), corpora allata (CA), antennal lobe (AL) and gnathal ganglion (GNG) (at protein level). Expression in CC and CA detected in most animals, in AL and GNG in few animals (at protein level).</text>
</comment>
<comment type="mass spectrometry" mass="1928.03" error="0.01" method="MALDI" evidence="2">
    <text>DAGWWLTRGAARSLGGVR-amide.</text>
</comment>
<comment type="similarity">
    <text evidence="4">Belongs to the insulin family.</text>
</comment>
<comment type="caution">
    <text evidence="4">Further mature peptides might exist.</text>
</comment>
<organism>
    <name type="scientific">Agrotis ipsilon</name>
    <name type="common">Black cutworm moth</name>
    <dbReference type="NCBI Taxonomy" id="56364"/>
    <lineage>
        <taxon>Eukaryota</taxon>
        <taxon>Metazoa</taxon>
        <taxon>Ecdysozoa</taxon>
        <taxon>Arthropoda</taxon>
        <taxon>Hexapoda</taxon>
        <taxon>Insecta</taxon>
        <taxon>Pterygota</taxon>
        <taxon>Neoptera</taxon>
        <taxon>Endopterygota</taxon>
        <taxon>Lepidoptera</taxon>
        <taxon>Glossata</taxon>
        <taxon>Ditrysia</taxon>
        <taxon>Noctuoidea</taxon>
        <taxon>Noctuidae</taxon>
        <taxon>Noctuinae</taxon>
        <taxon>Noctuini</taxon>
        <taxon>Agrotis</taxon>
    </lineage>
</organism>
<name>IRP4_AGRIP</name>
<evidence type="ECO:0000255" key="1"/>
<evidence type="ECO:0000269" key="2">
    <source>
    </source>
</evidence>
<evidence type="ECO:0000303" key="3">
    <source>
    </source>
</evidence>
<evidence type="ECO:0000305" key="4"/>
<evidence type="ECO:0000305" key="5">
    <source>
    </source>
</evidence>